<reference key="1">
    <citation type="submission" date="2006-03" db="EMBL/GenBank/DDBJ databases">
        <title>Complete sequence of chromosome of Nitrobacter hamburgensis X14.</title>
        <authorList>
            <consortium name="US DOE Joint Genome Institute"/>
            <person name="Copeland A."/>
            <person name="Lucas S."/>
            <person name="Lapidus A."/>
            <person name="Barry K."/>
            <person name="Detter J.C."/>
            <person name="Glavina del Rio T."/>
            <person name="Hammon N."/>
            <person name="Israni S."/>
            <person name="Dalin E."/>
            <person name="Tice H."/>
            <person name="Pitluck S."/>
            <person name="Chain P."/>
            <person name="Malfatti S."/>
            <person name="Shin M."/>
            <person name="Vergez L."/>
            <person name="Schmutz J."/>
            <person name="Larimer F."/>
            <person name="Land M."/>
            <person name="Hauser L."/>
            <person name="Kyrpides N."/>
            <person name="Ivanova N."/>
            <person name="Ward B."/>
            <person name="Arp D."/>
            <person name="Klotz M."/>
            <person name="Stein L."/>
            <person name="O'Mullan G."/>
            <person name="Starkenburg S."/>
            <person name="Sayavedra L."/>
            <person name="Poret-Peterson A.T."/>
            <person name="Gentry M.E."/>
            <person name="Bruce D."/>
            <person name="Richardson P."/>
        </authorList>
    </citation>
    <scope>NUCLEOTIDE SEQUENCE [LARGE SCALE GENOMIC DNA]</scope>
    <source>
        <strain>DSM 10229 / NCIMB 13809 / X14</strain>
    </source>
</reference>
<keyword id="KW-0131">Cell cycle</keyword>
<keyword id="KW-0132">Cell division</keyword>
<keyword id="KW-0997">Cell inner membrane</keyword>
<keyword id="KW-1003">Cell membrane</keyword>
<keyword id="KW-0133">Cell shape</keyword>
<keyword id="KW-0961">Cell wall biogenesis/degradation</keyword>
<keyword id="KW-0328">Glycosyltransferase</keyword>
<keyword id="KW-0472">Membrane</keyword>
<keyword id="KW-0573">Peptidoglycan synthesis</keyword>
<keyword id="KW-1185">Reference proteome</keyword>
<keyword id="KW-0808">Transferase</keyword>
<evidence type="ECO:0000255" key="1">
    <source>
        <dbReference type="HAMAP-Rule" id="MF_00033"/>
    </source>
</evidence>
<dbReference type="EC" id="2.4.1.227" evidence="1"/>
<dbReference type="EMBL" id="CP000319">
    <property type="protein sequence ID" value="ABE62104.1"/>
    <property type="molecule type" value="Genomic_DNA"/>
</dbReference>
<dbReference type="RefSeq" id="WP_011509796.1">
    <property type="nucleotide sequence ID" value="NC_007964.1"/>
</dbReference>
<dbReference type="SMR" id="Q1QNU3"/>
<dbReference type="STRING" id="323097.Nham_1279"/>
<dbReference type="CAZy" id="GT28">
    <property type="family name" value="Glycosyltransferase Family 28"/>
</dbReference>
<dbReference type="KEGG" id="nha:Nham_1279"/>
<dbReference type="eggNOG" id="COG0707">
    <property type="taxonomic scope" value="Bacteria"/>
</dbReference>
<dbReference type="HOGENOM" id="CLU_037404_2_1_5"/>
<dbReference type="OrthoDB" id="9808936at2"/>
<dbReference type="UniPathway" id="UPA00219"/>
<dbReference type="Proteomes" id="UP000001953">
    <property type="component" value="Chromosome"/>
</dbReference>
<dbReference type="GO" id="GO:0005886">
    <property type="term" value="C:plasma membrane"/>
    <property type="evidence" value="ECO:0007669"/>
    <property type="project" value="UniProtKB-SubCell"/>
</dbReference>
<dbReference type="GO" id="GO:0051991">
    <property type="term" value="F:UDP-N-acetyl-D-glucosamine:N-acetylmuramoyl-L-alanyl-D-glutamyl-meso-2,6-diaminopimelyl-D-alanyl-D-alanine-diphosphoundecaprenol 4-beta-N-acetylglucosaminlytransferase activity"/>
    <property type="evidence" value="ECO:0007669"/>
    <property type="project" value="RHEA"/>
</dbReference>
<dbReference type="GO" id="GO:0050511">
    <property type="term" value="F:undecaprenyldiphospho-muramoylpentapeptide beta-N-acetylglucosaminyltransferase activity"/>
    <property type="evidence" value="ECO:0007669"/>
    <property type="project" value="UniProtKB-UniRule"/>
</dbReference>
<dbReference type="GO" id="GO:0005975">
    <property type="term" value="P:carbohydrate metabolic process"/>
    <property type="evidence" value="ECO:0007669"/>
    <property type="project" value="InterPro"/>
</dbReference>
<dbReference type="GO" id="GO:0051301">
    <property type="term" value="P:cell division"/>
    <property type="evidence" value="ECO:0007669"/>
    <property type="project" value="UniProtKB-KW"/>
</dbReference>
<dbReference type="GO" id="GO:0071555">
    <property type="term" value="P:cell wall organization"/>
    <property type="evidence" value="ECO:0007669"/>
    <property type="project" value="UniProtKB-KW"/>
</dbReference>
<dbReference type="GO" id="GO:0030259">
    <property type="term" value="P:lipid glycosylation"/>
    <property type="evidence" value="ECO:0007669"/>
    <property type="project" value="UniProtKB-UniRule"/>
</dbReference>
<dbReference type="GO" id="GO:0009252">
    <property type="term" value="P:peptidoglycan biosynthetic process"/>
    <property type="evidence" value="ECO:0007669"/>
    <property type="project" value="UniProtKB-UniRule"/>
</dbReference>
<dbReference type="GO" id="GO:0008360">
    <property type="term" value="P:regulation of cell shape"/>
    <property type="evidence" value="ECO:0007669"/>
    <property type="project" value="UniProtKB-KW"/>
</dbReference>
<dbReference type="CDD" id="cd03785">
    <property type="entry name" value="GT28_MurG"/>
    <property type="match status" value="1"/>
</dbReference>
<dbReference type="Gene3D" id="3.40.50.2000">
    <property type="entry name" value="Glycogen Phosphorylase B"/>
    <property type="match status" value="2"/>
</dbReference>
<dbReference type="HAMAP" id="MF_00033">
    <property type="entry name" value="MurG"/>
    <property type="match status" value="1"/>
</dbReference>
<dbReference type="InterPro" id="IPR006009">
    <property type="entry name" value="GlcNAc_MurG"/>
</dbReference>
<dbReference type="InterPro" id="IPR007235">
    <property type="entry name" value="Glyco_trans_28_C"/>
</dbReference>
<dbReference type="InterPro" id="IPR004276">
    <property type="entry name" value="GlycoTrans_28_N"/>
</dbReference>
<dbReference type="NCBIfam" id="TIGR01133">
    <property type="entry name" value="murG"/>
    <property type="match status" value="1"/>
</dbReference>
<dbReference type="PANTHER" id="PTHR21015:SF22">
    <property type="entry name" value="GLYCOSYLTRANSFERASE"/>
    <property type="match status" value="1"/>
</dbReference>
<dbReference type="PANTHER" id="PTHR21015">
    <property type="entry name" value="UDP-N-ACETYLGLUCOSAMINE--N-ACETYLMURAMYL-(PENTAPEPTIDE) PYROPHOSPHORYL-UNDECAPRENOL N-ACETYLGLUCOSAMINE TRANSFERASE 1"/>
    <property type="match status" value="1"/>
</dbReference>
<dbReference type="Pfam" id="PF04101">
    <property type="entry name" value="Glyco_tran_28_C"/>
    <property type="match status" value="1"/>
</dbReference>
<dbReference type="Pfam" id="PF03033">
    <property type="entry name" value="Glyco_transf_28"/>
    <property type="match status" value="1"/>
</dbReference>
<dbReference type="SUPFAM" id="SSF53756">
    <property type="entry name" value="UDP-Glycosyltransferase/glycogen phosphorylase"/>
    <property type="match status" value="1"/>
</dbReference>
<comment type="function">
    <text evidence="1">Cell wall formation. Catalyzes the transfer of a GlcNAc subunit on undecaprenyl-pyrophosphoryl-MurNAc-pentapeptide (lipid intermediate I) to form undecaprenyl-pyrophosphoryl-MurNAc-(pentapeptide)GlcNAc (lipid intermediate II).</text>
</comment>
<comment type="catalytic activity">
    <reaction evidence="1">
        <text>di-trans,octa-cis-undecaprenyl diphospho-N-acetyl-alpha-D-muramoyl-L-alanyl-D-glutamyl-meso-2,6-diaminopimeloyl-D-alanyl-D-alanine + UDP-N-acetyl-alpha-D-glucosamine = di-trans,octa-cis-undecaprenyl diphospho-[N-acetyl-alpha-D-glucosaminyl-(1-&gt;4)]-N-acetyl-alpha-D-muramoyl-L-alanyl-D-glutamyl-meso-2,6-diaminopimeloyl-D-alanyl-D-alanine + UDP + H(+)</text>
        <dbReference type="Rhea" id="RHEA:31227"/>
        <dbReference type="ChEBI" id="CHEBI:15378"/>
        <dbReference type="ChEBI" id="CHEBI:57705"/>
        <dbReference type="ChEBI" id="CHEBI:58223"/>
        <dbReference type="ChEBI" id="CHEBI:61387"/>
        <dbReference type="ChEBI" id="CHEBI:61388"/>
        <dbReference type="EC" id="2.4.1.227"/>
    </reaction>
</comment>
<comment type="pathway">
    <text evidence="1">Cell wall biogenesis; peptidoglycan biosynthesis.</text>
</comment>
<comment type="subcellular location">
    <subcellularLocation>
        <location evidence="1">Cell inner membrane</location>
        <topology evidence="1">Peripheral membrane protein</topology>
        <orientation evidence="1">Cytoplasmic side</orientation>
    </subcellularLocation>
</comment>
<comment type="similarity">
    <text evidence="1">Belongs to the glycosyltransferase 28 family. MurG subfamily.</text>
</comment>
<sequence length="370" mass="38665">MTTTPLILLAAGGTGGHLFPAEALGVELMKRDLRVRLVTDSRALRYSGLFSKDMTDVVPSETVRGRSPLALARTGLMLATGTVVALNLMRRLKPAAVIGFGGYPTLPPLIAARLKGIPTVIHDANAVMGRANRLLSRRVNAIATSLPGVLDKEPSLIGKTTTTGTPMRPAILAASTVPFATPGSDGPLRVLVVGGSQGARVMSDIVPGAIEKLGSPLWQRLVLTQQVRDEDMARVRAVYERLRINAELAPFFADLPSRLASSHIIVSRSGAGTVAELGAIGRPSILVPLPGAIDQDQFANAGVLADVGGAIRIVQSDFTPDRLAAELSALAADPARLAAMAAAARTVGRLDAAERLADLVMKVARLDSPA</sequence>
<accession>Q1QNU3</accession>
<protein>
    <recommendedName>
        <fullName evidence="1">UDP-N-acetylglucosamine--N-acetylmuramyl-(pentapeptide) pyrophosphoryl-undecaprenol N-acetylglucosamine transferase</fullName>
        <ecNumber evidence="1">2.4.1.227</ecNumber>
    </recommendedName>
    <alternativeName>
        <fullName evidence="1">Undecaprenyl-PP-MurNAc-pentapeptide-UDPGlcNAc GlcNAc transferase</fullName>
    </alternativeName>
</protein>
<feature type="chain" id="PRO_0000315126" description="UDP-N-acetylglucosamine--N-acetylmuramyl-(pentapeptide) pyrophosphoryl-undecaprenol N-acetylglucosamine transferase">
    <location>
        <begin position="1"/>
        <end position="370"/>
    </location>
</feature>
<feature type="binding site" evidence="1">
    <location>
        <begin position="14"/>
        <end position="16"/>
    </location>
    <ligand>
        <name>UDP-N-acetyl-alpha-D-glucosamine</name>
        <dbReference type="ChEBI" id="CHEBI:57705"/>
    </ligand>
</feature>
<feature type="binding site" evidence="1">
    <location>
        <position position="125"/>
    </location>
    <ligand>
        <name>UDP-N-acetyl-alpha-D-glucosamine</name>
        <dbReference type="ChEBI" id="CHEBI:57705"/>
    </ligand>
</feature>
<feature type="binding site" evidence="1">
    <location>
        <position position="168"/>
    </location>
    <ligand>
        <name>UDP-N-acetyl-alpha-D-glucosamine</name>
        <dbReference type="ChEBI" id="CHEBI:57705"/>
    </ligand>
</feature>
<feature type="binding site" evidence="1">
    <location>
        <position position="196"/>
    </location>
    <ligand>
        <name>UDP-N-acetyl-alpha-D-glucosamine</name>
        <dbReference type="ChEBI" id="CHEBI:57705"/>
    </ligand>
</feature>
<feature type="binding site" evidence="1">
    <location>
        <position position="297"/>
    </location>
    <ligand>
        <name>UDP-N-acetyl-alpha-D-glucosamine</name>
        <dbReference type="ChEBI" id="CHEBI:57705"/>
    </ligand>
</feature>
<organism>
    <name type="scientific">Nitrobacter hamburgensis (strain DSM 10229 / NCIMB 13809 / X14)</name>
    <dbReference type="NCBI Taxonomy" id="323097"/>
    <lineage>
        <taxon>Bacteria</taxon>
        <taxon>Pseudomonadati</taxon>
        <taxon>Pseudomonadota</taxon>
        <taxon>Alphaproteobacteria</taxon>
        <taxon>Hyphomicrobiales</taxon>
        <taxon>Nitrobacteraceae</taxon>
        <taxon>Nitrobacter</taxon>
    </lineage>
</organism>
<gene>
    <name evidence="1" type="primary">murG</name>
    <name type="ordered locus">Nham_1279</name>
</gene>
<name>MURG_NITHX</name>
<proteinExistence type="inferred from homology"/>